<evidence type="ECO:0000250" key="1"/>
<evidence type="ECO:0000250" key="2">
    <source>
        <dbReference type="UniProtKB" id="Q15166"/>
    </source>
</evidence>
<evidence type="ECO:0000255" key="3"/>
<evidence type="ECO:0000305" key="4"/>
<sequence length="354" mass="39458">MGKLVALTVLGASLALLGERLLNFRERVSTSREIKPTEPQNCHLIEGLENGSEDIDILPSGLAFISTGLKYPGMPSFAPDKPGRIFLMDLNEPYPKAQALEISDGFDQDSLNPHGISTFIDKDNTVYLYAVNHPHMDSTVEIFKFEEQPRSLVHLKTIKHELFESVNDIVVLGPEQFYATRDHYFTSHFLVLLEMILDPHWTSVLFYSPKEVKVVAQGFSSANGITVSLDQKYVYVADVTAKNIHIMKKHNNWDLTPVKVIQLGTLVDNLTVDPATGDILAGCHPNPMKLLIYNPEDPPGSEVLRIQDPLSDNPRVSTLYSNNGSVLQGSTVASVYHKKMLIGTIFHKALYCEL</sequence>
<protein>
    <recommendedName>
        <fullName>Serum paraoxonase/lactonase 3</fullName>
        <ecNumber>3.1.1.2</ecNumber>
        <ecNumber>3.1.1.81</ecNumber>
        <ecNumber>3.1.8.1</ecNumber>
    </recommendedName>
</protein>
<proteinExistence type="evidence at transcript level"/>
<dbReference type="EC" id="3.1.1.2"/>
<dbReference type="EC" id="3.1.1.81"/>
<dbReference type="EC" id="3.1.8.1"/>
<dbReference type="EMBL" id="BC079466">
    <property type="protein sequence ID" value="AAH79466.1"/>
    <property type="molecule type" value="mRNA"/>
</dbReference>
<dbReference type="RefSeq" id="NP_001004086.1">
    <property type="nucleotide sequence ID" value="NM_001004086.1"/>
</dbReference>
<dbReference type="SMR" id="Q68FP2"/>
<dbReference type="FunCoup" id="Q68FP2">
    <property type="interactions" value="56"/>
</dbReference>
<dbReference type="STRING" id="10116.ENSRNOP00000012050"/>
<dbReference type="GlyCosmos" id="Q68FP2">
    <property type="glycosylation" value="3 sites, No reported glycans"/>
</dbReference>
<dbReference type="GlyGen" id="Q68FP2">
    <property type="glycosylation" value="3 sites"/>
</dbReference>
<dbReference type="PhosphoSitePlus" id="Q68FP2"/>
<dbReference type="PaxDb" id="10116-ENSRNOP00000012050"/>
<dbReference type="GeneID" id="312086"/>
<dbReference type="KEGG" id="rno:312086"/>
<dbReference type="UCSC" id="RGD:1302965">
    <property type="organism name" value="rat"/>
</dbReference>
<dbReference type="AGR" id="RGD:1302965"/>
<dbReference type="CTD" id="5446"/>
<dbReference type="RGD" id="1302965">
    <property type="gene designation" value="Pon3"/>
</dbReference>
<dbReference type="VEuPathDB" id="HostDB:ENSRNOG00000009096"/>
<dbReference type="eggNOG" id="ENOG502S6UP">
    <property type="taxonomic scope" value="Eukaryota"/>
</dbReference>
<dbReference type="HOGENOM" id="CLU_049839_0_1_1"/>
<dbReference type="InParanoid" id="Q68FP2"/>
<dbReference type="OrthoDB" id="40462at9989"/>
<dbReference type="PhylomeDB" id="Q68FP2"/>
<dbReference type="TreeFam" id="TF322436"/>
<dbReference type="BRENDA" id="3.1.1.2">
    <property type="organism ID" value="5301"/>
</dbReference>
<dbReference type="BRENDA" id="3.1.1.25">
    <property type="organism ID" value="5301"/>
</dbReference>
<dbReference type="BRENDA" id="3.1.8.1">
    <property type="organism ID" value="5301"/>
</dbReference>
<dbReference type="Reactome" id="R-RNO-2142688">
    <property type="pathway name" value="Synthesis of 5-eicosatetraenoic acids"/>
</dbReference>
<dbReference type="Reactome" id="R-RNO-9754706">
    <property type="pathway name" value="Atorvastatin ADME"/>
</dbReference>
<dbReference type="PRO" id="PR:Q68FP2"/>
<dbReference type="Proteomes" id="UP000002494">
    <property type="component" value="Chromosome 4"/>
</dbReference>
<dbReference type="Bgee" id="ENSRNOG00000009096">
    <property type="expression patterns" value="Expressed in lung and 19 other cell types or tissues"/>
</dbReference>
<dbReference type="GO" id="GO:0005615">
    <property type="term" value="C:extracellular space"/>
    <property type="evidence" value="ECO:0000314"/>
    <property type="project" value="RGD"/>
</dbReference>
<dbReference type="GO" id="GO:0102007">
    <property type="term" value="F:acyl-L-homoserine-lactone lactonohydrolase activity"/>
    <property type="evidence" value="ECO:0000266"/>
    <property type="project" value="RGD"/>
</dbReference>
<dbReference type="GO" id="GO:0004063">
    <property type="term" value="F:aryldialkylphosphatase activity"/>
    <property type="evidence" value="ECO:0007669"/>
    <property type="project" value="UniProtKB-EC"/>
</dbReference>
<dbReference type="GO" id="GO:0004064">
    <property type="term" value="F:arylesterase activity"/>
    <property type="evidence" value="ECO:0000314"/>
    <property type="project" value="RGD"/>
</dbReference>
<dbReference type="GO" id="GO:0047856">
    <property type="term" value="F:dihydrocoumarin hydrolase activity"/>
    <property type="evidence" value="ECO:0000314"/>
    <property type="project" value="RGD"/>
</dbReference>
<dbReference type="GO" id="GO:0046872">
    <property type="term" value="F:metal ion binding"/>
    <property type="evidence" value="ECO:0007669"/>
    <property type="project" value="UniProtKB-KW"/>
</dbReference>
<dbReference type="GO" id="GO:0042803">
    <property type="term" value="F:protein homodimerization activity"/>
    <property type="evidence" value="ECO:0000266"/>
    <property type="project" value="RGD"/>
</dbReference>
<dbReference type="GO" id="GO:0046395">
    <property type="term" value="P:carboxylic acid catabolic process"/>
    <property type="evidence" value="ECO:0000266"/>
    <property type="project" value="RGD"/>
</dbReference>
<dbReference type="GO" id="GO:0046226">
    <property type="term" value="P:coumarin catabolic process"/>
    <property type="evidence" value="ECO:0000314"/>
    <property type="project" value="RGD"/>
</dbReference>
<dbReference type="GO" id="GO:0051649">
    <property type="term" value="P:establishment of localization in cell"/>
    <property type="evidence" value="ECO:0000266"/>
    <property type="project" value="RGD"/>
</dbReference>
<dbReference type="GO" id="GO:1901335">
    <property type="term" value="P:lactone catabolic process"/>
    <property type="evidence" value="ECO:0000266"/>
    <property type="project" value="RGD"/>
</dbReference>
<dbReference type="GO" id="GO:0032929">
    <property type="term" value="P:negative regulation of superoxide anion generation"/>
    <property type="evidence" value="ECO:0000266"/>
    <property type="project" value="RGD"/>
</dbReference>
<dbReference type="GO" id="GO:0010124">
    <property type="term" value="P:phenylacetate catabolic process"/>
    <property type="evidence" value="ECO:0000314"/>
    <property type="project" value="RGD"/>
</dbReference>
<dbReference type="GO" id="GO:2001038">
    <property type="term" value="P:regulation of cellular response to drug"/>
    <property type="evidence" value="ECO:0000266"/>
    <property type="project" value="RGD"/>
</dbReference>
<dbReference type="GO" id="GO:0003096">
    <property type="term" value="P:renal sodium ion transport"/>
    <property type="evidence" value="ECO:0000266"/>
    <property type="project" value="RGD"/>
</dbReference>
<dbReference type="GO" id="GO:0009636">
    <property type="term" value="P:response to toxic substance"/>
    <property type="evidence" value="ECO:0000318"/>
    <property type="project" value="GO_Central"/>
</dbReference>
<dbReference type="FunFam" id="2.120.10.30:FF:000023">
    <property type="entry name" value="Serum paraoxonase/arylesterase 2"/>
    <property type="match status" value="1"/>
</dbReference>
<dbReference type="Gene3D" id="2.120.10.30">
    <property type="entry name" value="TolB, C-terminal domain"/>
    <property type="match status" value="1"/>
</dbReference>
<dbReference type="InterPro" id="IPR011042">
    <property type="entry name" value="6-blade_b-propeller_TolB-like"/>
</dbReference>
<dbReference type="InterPro" id="IPR002640">
    <property type="entry name" value="Arylesterase"/>
</dbReference>
<dbReference type="InterPro" id="IPR008364">
    <property type="entry name" value="Paraoxonase2"/>
</dbReference>
<dbReference type="InterPro" id="IPR051288">
    <property type="entry name" value="Serum_paraoxonase/arylesterase"/>
</dbReference>
<dbReference type="PANTHER" id="PTHR11799">
    <property type="entry name" value="PARAOXONASE"/>
    <property type="match status" value="1"/>
</dbReference>
<dbReference type="PANTHER" id="PTHR11799:SF14">
    <property type="entry name" value="SERUM PARAOXONASE_LACTONASE 3"/>
    <property type="match status" value="1"/>
</dbReference>
<dbReference type="Pfam" id="PF01731">
    <property type="entry name" value="Arylesterase"/>
    <property type="match status" value="1"/>
</dbReference>
<dbReference type="PRINTS" id="PR01785">
    <property type="entry name" value="PARAOXONASE"/>
</dbReference>
<dbReference type="PRINTS" id="PR01787">
    <property type="entry name" value="PARAOXONASE2"/>
</dbReference>
<dbReference type="SUPFAM" id="SSF63829">
    <property type="entry name" value="Calcium-dependent phosphotriesterase"/>
    <property type="match status" value="1"/>
</dbReference>
<keyword id="KW-0106">Calcium</keyword>
<keyword id="KW-1015">Disulfide bond</keyword>
<keyword id="KW-0325">Glycoprotein</keyword>
<keyword id="KW-0378">Hydrolase</keyword>
<keyword id="KW-0479">Metal-binding</keyword>
<keyword id="KW-0597">Phosphoprotein</keyword>
<keyword id="KW-1185">Reference proteome</keyword>
<keyword id="KW-0964">Secreted</keyword>
<keyword id="KW-0732">Signal</keyword>
<feature type="chain" id="PRO_0000223292" description="Serum paraoxonase/lactonase 3">
    <location>
        <begin position="1"/>
        <end position="354"/>
    </location>
</feature>
<feature type="signal peptide" description="Not cleaved" evidence="3">
    <location>
        <begin position="1"/>
        <end status="unknown"/>
    </location>
</feature>
<feature type="active site" description="Proton acceptor" evidence="1">
    <location>
        <position position="114"/>
    </location>
</feature>
<feature type="binding site" evidence="1">
    <location>
        <position position="53"/>
    </location>
    <ligand>
        <name>Ca(2+)</name>
        <dbReference type="ChEBI" id="CHEBI:29108"/>
        <label>1</label>
        <note>catalytic</note>
    </ligand>
</feature>
<feature type="binding site" evidence="1">
    <location>
        <position position="54"/>
    </location>
    <ligand>
        <name>Ca(2+)</name>
        <dbReference type="ChEBI" id="CHEBI:29108"/>
        <label>2</label>
    </ligand>
</feature>
<feature type="binding site" evidence="1">
    <location>
        <position position="116"/>
    </location>
    <ligand>
        <name>Ca(2+)</name>
        <dbReference type="ChEBI" id="CHEBI:29108"/>
        <label>2</label>
    </ligand>
</feature>
<feature type="binding site" evidence="1">
    <location>
        <position position="167"/>
    </location>
    <ligand>
        <name>Ca(2+)</name>
        <dbReference type="ChEBI" id="CHEBI:29108"/>
        <label>1</label>
        <note>catalytic</note>
    </ligand>
</feature>
<feature type="binding site" evidence="1">
    <location>
        <position position="168"/>
    </location>
    <ligand>
        <name>Ca(2+)</name>
        <dbReference type="ChEBI" id="CHEBI:29108"/>
        <label>2</label>
    </ligand>
</feature>
<feature type="binding site" evidence="1">
    <location>
        <position position="223"/>
    </location>
    <ligand>
        <name>Ca(2+)</name>
        <dbReference type="ChEBI" id="CHEBI:29108"/>
        <label>1</label>
        <note>catalytic</note>
    </ligand>
</feature>
<feature type="binding site" evidence="1">
    <location>
        <position position="268"/>
    </location>
    <ligand>
        <name>Ca(2+)</name>
        <dbReference type="ChEBI" id="CHEBI:29108"/>
        <label>1</label>
        <note>catalytic</note>
    </ligand>
</feature>
<feature type="binding site" evidence="1">
    <location>
        <position position="269"/>
    </location>
    <ligand>
        <name>Ca(2+)</name>
        <dbReference type="ChEBI" id="CHEBI:29108"/>
        <label>1</label>
        <note>catalytic</note>
    </ligand>
</feature>
<feature type="modified residue" description="Phosphoserine" evidence="2">
    <location>
        <position position="165"/>
    </location>
</feature>
<feature type="glycosylation site" description="N-linked (GlcNAc...) asparagine" evidence="3">
    <location>
        <position position="50"/>
    </location>
</feature>
<feature type="glycosylation site" description="N-linked (GlcNAc...) asparagine" evidence="3">
    <location>
        <position position="269"/>
    </location>
</feature>
<feature type="glycosylation site" description="N-linked (GlcNAc...) asparagine" evidence="3">
    <location>
        <position position="323"/>
    </location>
</feature>
<feature type="disulfide bond" evidence="1">
    <location>
        <begin position="42"/>
        <end position="352"/>
    </location>
</feature>
<gene>
    <name type="primary">Pon3</name>
</gene>
<name>PON3_RAT</name>
<organism>
    <name type="scientific">Rattus norvegicus</name>
    <name type="common">Rat</name>
    <dbReference type="NCBI Taxonomy" id="10116"/>
    <lineage>
        <taxon>Eukaryota</taxon>
        <taxon>Metazoa</taxon>
        <taxon>Chordata</taxon>
        <taxon>Craniata</taxon>
        <taxon>Vertebrata</taxon>
        <taxon>Euteleostomi</taxon>
        <taxon>Mammalia</taxon>
        <taxon>Eutheria</taxon>
        <taxon>Euarchontoglires</taxon>
        <taxon>Glires</taxon>
        <taxon>Rodentia</taxon>
        <taxon>Myomorpha</taxon>
        <taxon>Muroidea</taxon>
        <taxon>Muridae</taxon>
        <taxon>Murinae</taxon>
        <taxon>Rattus</taxon>
    </lineage>
</organism>
<comment type="function">
    <text evidence="1">Has low activity towards the organophosphate paraxon and aromatic carboxylic acid esters. Rapidly hydrolyzes lactones such as statin prodrugs (e.g. lovastatin). Hydrolyzes aromatic lactones and 5- or 6-member ring lactones with aliphatic substituents but not simple lactones or those with polar substituents (By similarity).</text>
</comment>
<comment type="catalytic activity">
    <reaction>
        <text>a phenyl acetate + H2O = a phenol + acetate + H(+)</text>
        <dbReference type="Rhea" id="RHEA:17309"/>
        <dbReference type="ChEBI" id="CHEBI:15377"/>
        <dbReference type="ChEBI" id="CHEBI:15378"/>
        <dbReference type="ChEBI" id="CHEBI:30089"/>
        <dbReference type="ChEBI" id="CHEBI:33853"/>
        <dbReference type="ChEBI" id="CHEBI:140310"/>
        <dbReference type="EC" id="3.1.1.2"/>
    </reaction>
</comment>
<comment type="catalytic activity">
    <reaction>
        <text>An aryl dialkyl phosphate + H2O = dialkyl phosphate + an aryl alcohol.</text>
        <dbReference type="EC" id="3.1.8.1"/>
    </reaction>
</comment>
<comment type="catalytic activity">
    <reaction>
        <text>an N-acyl-L-homoserine lactone + H2O = an N-acyl-L-homoserine + H(+)</text>
        <dbReference type="Rhea" id="RHEA:22576"/>
        <dbReference type="ChEBI" id="CHEBI:15377"/>
        <dbReference type="ChEBI" id="CHEBI:15378"/>
        <dbReference type="ChEBI" id="CHEBI:55474"/>
        <dbReference type="ChEBI" id="CHEBI:58921"/>
        <dbReference type="EC" id="3.1.1.81"/>
    </reaction>
</comment>
<comment type="cofactor">
    <cofactor evidence="1">
        <name>Ca(2+)</name>
        <dbReference type="ChEBI" id="CHEBI:29108"/>
    </cofactor>
    <text evidence="1">Binds 2 calcium ions per subunit.</text>
</comment>
<comment type="subunit">
    <text evidence="1">Homodimer.</text>
</comment>
<comment type="subcellular location">
    <subcellularLocation>
        <location evidence="1">Secreted</location>
        <location evidence="1">Extracellular space</location>
    </subcellularLocation>
</comment>
<comment type="PTM">
    <text evidence="1">Glycosylated.</text>
</comment>
<comment type="PTM">
    <text evidence="1">The signal sequence is not cleaved.</text>
</comment>
<comment type="similarity">
    <text evidence="4">Belongs to the paraoxonase family.</text>
</comment>
<reference key="1">
    <citation type="journal article" date="2004" name="Genome Res.">
        <title>The status, quality, and expansion of the NIH full-length cDNA project: the Mammalian Gene Collection (MGC).</title>
        <authorList>
            <consortium name="The MGC Project Team"/>
        </authorList>
    </citation>
    <scope>NUCLEOTIDE SEQUENCE [LARGE SCALE MRNA]</scope>
    <source>
        <tissue>Lung</tissue>
    </source>
</reference>
<accession>Q68FP2</accession>